<proteinExistence type="inferred from homology"/>
<comment type="function">
    <text evidence="1">Catalyzes the complicated ring closure reaction between the two acyclic compounds 1-deoxy-D-xylulose-5-phosphate (DXP) and 3-amino-2-oxopropyl phosphate (1-amino-acetone-3-phosphate or AAP) to form pyridoxine 5'-phosphate (PNP) and inorganic phosphate.</text>
</comment>
<comment type="catalytic activity">
    <reaction evidence="1">
        <text>3-amino-2-oxopropyl phosphate + 1-deoxy-D-xylulose 5-phosphate = pyridoxine 5'-phosphate + phosphate + 2 H2O + H(+)</text>
        <dbReference type="Rhea" id="RHEA:15265"/>
        <dbReference type="ChEBI" id="CHEBI:15377"/>
        <dbReference type="ChEBI" id="CHEBI:15378"/>
        <dbReference type="ChEBI" id="CHEBI:43474"/>
        <dbReference type="ChEBI" id="CHEBI:57279"/>
        <dbReference type="ChEBI" id="CHEBI:57792"/>
        <dbReference type="ChEBI" id="CHEBI:58589"/>
        <dbReference type="EC" id="2.6.99.2"/>
    </reaction>
</comment>
<comment type="pathway">
    <text evidence="1">Cofactor biosynthesis; pyridoxine 5'-phosphate biosynthesis; pyridoxine 5'-phosphate from D-erythrose 4-phosphate: step 5/5.</text>
</comment>
<comment type="subunit">
    <text evidence="1">Homooctamer; tetramer of dimers.</text>
</comment>
<comment type="subcellular location">
    <subcellularLocation>
        <location evidence="1">Cytoplasm</location>
    </subcellularLocation>
</comment>
<comment type="similarity">
    <text evidence="1">Belongs to the PNP synthase family.</text>
</comment>
<feature type="chain" id="PRO_0000231833" description="Pyridoxine 5'-phosphate synthase">
    <location>
        <begin position="1"/>
        <end position="243"/>
    </location>
</feature>
<feature type="active site" description="Proton acceptor" evidence="1">
    <location>
        <position position="45"/>
    </location>
</feature>
<feature type="active site" description="Proton acceptor" evidence="1">
    <location>
        <position position="72"/>
    </location>
</feature>
<feature type="active site" description="Proton donor" evidence="1">
    <location>
        <position position="193"/>
    </location>
</feature>
<feature type="binding site" evidence="1">
    <location>
        <position position="9"/>
    </location>
    <ligand>
        <name>3-amino-2-oxopropyl phosphate</name>
        <dbReference type="ChEBI" id="CHEBI:57279"/>
    </ligand>
</feature>
<feature type="binding site" evidence="1">
    <location>
        <begin position="11"/>
        <end position="12"/>
    </location>
    <ligand>
        <name>1-deoxy-D-xylulose 5-phosphate</name>
        <dbReference type="ChEBI" id="CHEBI:57792"/>
    </ligand>
</feature>
<feature type="binding site" evidence="1">
    <location>
        <position position="20"/>
    </location>
    <ligand>
        <name>3-amino-2-oxopropyl phosphate</name>
        <dbReference type="ChEBI" id="CHEBI:57279"/>
    </ligand>
</feature>
<feature type="binding site" evidence="1">
    <location>
        <position position="47"/>
    </location>
    <ligand>
        <name>1-deoxy-D-xylulose 5-phosphate</name>
        <dbReference type="ChEBI" id="CHEBI:57792"/>
    </ligand>
</feature>
<feature type="binding site" evidence="1">
    <location>
        <position position="52"/>
    </location>
    <ligand>
        <name>1-deoxy-D-xylulose 5-phosphate</name>
        <dbReference type="ChEBI" id="CHEBI:57792"/>
    </ligand>
</feature>
<feature type="binding site" evidence="1">
    <location>
        <position position="102"/>
    </location>
    <ligand>
        <name>1-deoxy-D-xylulose 5-phosphate</name>
        <dbReference type="ChEBI" id="CHEBI:57792"/>
    </ligand>
</feature>
<feature type="binding site" evidence="1">
    <location>
        <position position="194"/>
    </location>
    <ligand>
        <name>3-amino-2-oxopropyl phosphate</name>
        <dbReference type="ChEBI" id="CHEBI:57279"/>
    </ligand>
</feature>
<feature type="binding site" evidence="1">
    <location>
        <begin position="215"/>
        <end position="216"/>
    </location>
    <ligand>
        <name>3-amino-2-oxopropyl phosphate</name>
        <dbReference type="ChEBI" id="CHEBI:57279"/>
    </ligand>
</feature>
<feature type="site" description="Transition state stabilizer" evidence="1">
    <location>
        <position position="153"/>
    </location>
</feature>
<name>PDXJ_PSET1</name>
<evidence type="ECO:0000255" key="1">
    <source>
        <dbReference type="HAMAP-Rule" id="MF_00279"/>
    </source>
</evidence>
<sequence>MKDILLGVNVDHIATLRQARGTSYPDPAHAASVAEHAGADGITIHLREDRRHIQDRDVYVMAKTIQTRMNLETAVTDEMINIALEVKPEYVCLVPEKREELTTEGGLDVAGNLEKITAATKTLSDAGIKVSLFIDADKAQLDAAKATGAPYVEIHTGAYADATTDEAISKELEHIRQGVKYAASIGLIVNAGHGLHYHNVKPIAAMEEIYELNIGHAIIARAAIDGLDKAVRDMKRLMLEARA</sequence>
<keyword id="KW-0963">Cytoplasm</keyword>
<keyword id="KW-0664">Pyridoxine biosynthesis</keyword>
<keyword id="KW-1185">Reference proteome</keyword>
<keyword id="KW-0808">Transferase</keyword>
<dbReference type="EC" id="2.6.99.2" evidence="1"/>
<dbReference type="EMBL" id="CR954246">
    <property type="protein sequence ID" value="CAI85818.1"/>
    <property type="molecule type" value="Genomic_DNA"/>
</dbReference>
<dbReference type="SMR" id="Q3IDK9"/>
<dbReference type="STRING" id="326442.PSHAa0735"/>
<dbReference type="KEGG" id="pha:PSHAa0735"/>
<dbReference type="eggNOG" id="COG0854">
    <property type="taxonomic scope" value="Bacteria"/>
</dbReference>
<dbReference type="HOGENOM" id="CLU_074563_0_0_6"/>
<dbReference type="BioCyc" id="PHAL326442:PSHA_RS03590-MONOMER"/>
<dbReference type="UniPathway" id="UPA00244">
    <property type="reaction ID" value="UER00313"/>
</dbReference>
<dbReference type="Proteomes" id="UP000006843">
    <property type="component" value="Chromosome I"/>
</dbReference>
<dbReference type="GO" id="GO:0005829">
    <property type="term" value="C:cytosol"/>
    <property type="evidence" value="ECO:0007669"/>
    <property type="project" value="TreeGrafter"/>
</dbReference>
<dbReference type="GO" id="GO:0033856">
    <property type="term" value="F:pyridoxine 5'-phosphate synthase activity"/>
    <property type="evidence" value="ECO:0007669"/>
    <property type="project" value="UniProtKB-EC"/>
</dbReference>
<dbReference type="GO" id="GO:0008615">
    <property type="term" value="P:pyridoxine biosynthetic process"/>
    <property type="evidence" value="ECO:0007669"/>
    <property type="project" value="UniProtKB-UniRule"/>
</dbReference>
<dbReference type="CDD" id="cd00003">
    <property type="entry name" value="PNPsynthase"/>
    <property type="match status" value="1"/>
</dbReference>
<dbReference type="FunFam" id="3.20.20.70:FF:000042">
    <property type="entry name" value="Pyridoxine 5'-phosphate synthase"/>
    <property type="match status" value="1"/>
</dbReference>
<dbReference type="Gene3D" id="3.20.20.70">
    <property type="entry name" value="Aldolase class I"/>
    <property type="match status" value="1"/>
</dbReference>
<dbReference type="HAMAP" id="MF_00279">
    <property type="entry name" value="PdxJ"/>
    <property type="match status" value="1"/>
</dbReference>
<dbReference type="InterPro" id="IPR013785">
    <property type="entry name" value="Aldolase_TIM"/>
</dbReference>
<dbReference type="InterPro" id="IPR004569">
    <property type="entry name" value="PyrdxlP_synth_PdxJ"/>
</dbReference>
<dbReference type="InterPro" id="IPR036130">
    <property type="entry name" value="Pyridoxine-5'_phos_synth"/>
</dbReference>
<dbReference type="NCBIfam" id="TIGR00559">
    <property type="entry name" value="pdxJ"/>
    <property type="match status" value="1"/>
</dbReference>
<dbReference type="NCBIfam" id="NF003623">
    <property type="entry name" value="PRK05265.1-1"/>
    <property type="match status" value="1"/>
</dbReference>
<dbReference type="NCBIfam" id="NF003625">
    <property type="entry name" value="PRK05265.1-3"/>
    <property type="match status" value="1"/>
</dbReference>
<dbReference type="NCBIfam" id="NF003627">
    <property type="entry name" value="PRK05265.1-5"/>
    <property type="match status" value="1"/>
</dbReference>
<dbReference type="PANTHER" id="PTHR30456">
    <property type="entry name" value="PYRIDOXINE 5'-PHOSPHATE SYNTHASE"/>
    <property type="match status" value="1"/>
</dbReference>
<dbReference type="PANTHER" id="PTHR30456:SF0">
    <property type="entry name" value="PYRIDOXINE 5'-PHOSPHATE SYNTHASE"/>
    <property type="match status" value="1"/>
</dbReference>
<dbReference type="Pfam" id="PF03740">
    <property type="entry name" value="PdxJ"/>
    <property type="match status" value="1"/>
</dbReference>
<dbReference type="SUPFAM" id="SSF63892">
    <property type="entry name" value="Pyridoxine 5'-phosphate synthase"/>
    <property type="match status" value="1"/>
</dbReference>
<reference key="1">
    <citation type="journal article" date="2005" name="Genome Res.">
        <title>Coping with cold: the genome of the versatile marine Antarctica bacterium Pseudoalteromonas haloplanktis TAC125.</title>
        <authorList>
            <person name="Medigue C."/>
            <person name="Krin E."/>
            <person name="Pascal G."/>
            <person name="Barbe V."/>
            <person name="Bernsel A."/>
            <person name="Bertin P.N."/>
            <person name="Cheung F."/>
            <person name="Cruveiller S."/>
            <person name="D'Amico S."/>
            <person name="Duilio A."/>
            <person name="Fang G."/>
            <person name="Feller G."/>
            <person name="Ho C."/>
            <person name="Mangenot S."/>
            <person name="Marino G."/>
            <person name="Nilsson J."/>
            <person name="Parrilli E."/>
            <person name="Rocha E.P.C."/>
            <person name="Rouy Z."/>
            <person name="Sekowska A."/>
            <person name="Tutino M.L."/>
            <person name="Vallenet D."/>
            <person name="von Heijne G."/>
            <person name="Danchin A."/>
        </authorList>
    </citation>
    <scope>NUCLEOTIDE SEQUENCE [LARGE SCALE GENOMIC DNA]</scope>
    <source>
        <strain>TAC 125</strain>
    </source>
</reference>
<accession>Q3IDK9</accession>
<protein>
    <recommendedName>
        <fullName evidence="1">Pyridoxine 5'-phosphate synthase</fullName>
        <shortName evidence="1">PNP synthase</shortName>
        <ecNumber evidence="1">2.6.99.2</ecNumber>
    </recommendedName>
</protein>
<organism>
    <name type="scientific">Pseudoalteromonas translucida (strain TAC 125)</name>
    <dbReference type="NCBI Taxonomy" id="326442"/>
    <lineage>
        <taxon>Bacteria</taxon>
        <taxon>Pseudomonadati</taxon>
        <taxon>Pseudomonadota</taxon>
        <taxon>Gammaproteobacteria</taxon>
        <taxon>Alteromonadales</taxon>
        <taxon>Pseudoalteromonadaceae</taxon>
        <taxon>Pseudoalteromonas</taxon>
    </lineage>
</organism>
<gene>
    <name evidence="1" type="primary">pdxJ</name>
    <name type="ordered locus">PSHAa0735</name>
</gene>